<organism>
    <name type="scientific">Vibrio parahaemolyticus serotype O3:K6 (strain RIMD 2210633)</name>
    <dbReference type="NCBI Taxonomy" id="223926"/>
    <lineage>
        <taxon>Bacteria</taxon>
        <taxon>Pseudomonadati</taxon>
        <taxon>Pseudomonadota</taxon>
        <taxon>Gammaproteobacteria</taxon>
        <taxon>Vibrionales</taxon>
        <taxon>Vibrionaceae</taxon>
        <taxon>Vibrio</taxon>
    </lineage>
</organism>
<evidence type="ECO:0000255" key="1">
    <source>
        <dbReference type="HAMAP-Rule" id="MF_01077"/>
    </source>
</evidence>
<gene>
    <name evidence="1" type="primary">rimP</name>
    <name type="ordered locus">VP2458</name>
</gene>
<keyword id="KW-0963">Cytoplasm</keyword>
<keyword id="KW-0690">Ribosome biogenesis</keyword>
<proteinExistence type="inferred from homology"/>
<feature type="chain" id="PRO_0000181950" description="Ribosome maturation factor RimP">
    <location>
        <begin position="1"/>
        <end position="151"/>
    </location>
</feature>
<dbReference type="EMBL" id="BA000031">
    <property type="protein sequence ID" value="BAC60721.1"/>
    <property type="molecule type" value="Genomic_DNA"/>
</dbReference>
<dbReference type="RefSeq" id="NP_798837.1">
    <property type="nucleotide sequence ID" value="NC_004603.1"/>
</dbReference>
<dbReference type="RefSeq" id="WP_005456065.1">
    <property type="nucleotide sequence ID" value="NC_004603.1"/>
</dbReference>
<dbReference type="SMR" id="Q87M00"/>
<dbReference type="GeneID" id="1189971"/>
<dbReference type="KEGG" id="vpa:VP2458"/>
<dbReference type="PATRIC" id="fig|223926.6.peg.2359"/>
<dbReference type="eggNOG" id="COG0779">
    <property type="taxonomic scope" value="Bacteria"/>
</dbReference>
<dbReference type="HOGENOM" id="CLU_070525_1_1_6"/>
<dbReference type="Proteomes" id="UP000002493">
    <property type="component" value="Chromosome 1"/>
</dbReference>
<dbReference type="GO" id="GO:0005829">
    <property type="term" value="C:cytosol"/>
    <property type="evidence" value="ECO:0007669"/>
    <property type="project" value="TreeGrafter"/>
</dbReference>
<dbReference type="GO" id="GO:0000028">
    <property type="term" value="P:ribosomal small subunit assembly"/>
    <property type="evidence" value="ECO:0007669"/>
    <property type="project" value="TreeGrafter"/>
</dbReference>
<dbReference type="GO" id="GO:0006412">
    <property type="term" value="P:translation"/>
    <property type="evidence" value="ECO:0007669"/>
    <property type="project" value="TreeGrafter"/>
</dbReference>
<dbReference type="CDD" id="cd01734">
    <property type="entry name" value="YlxS_C"/>
    <property type="match status" value="1"/>
</dbReference>
<dbReference type="FunFam" id="2.30.30.180:FF:000001">
    <property type="entry name" value="Ribosome maturation factor RimP"/>
    <property type="match status" value="1"/>
</dbReference>
<dbReference type="FunFam" id="3.30.300.70:FF:000001">
    <property type="entry name" value="Ribosome maturation factor RimP"/>
    <property type="match status" value="1"/>
</dbReference>
<dbReference type="Gene3D" id="2.30.30.180">
    <property type="entry name" value="Ribosome maturation factor RimP, C-terminal domain"/>
    <property type="match status" value="1"/>
</dbReference>
<dbReference type="Gene3D" id="3.30.300.70">
    <property type="entry name" value="RimP-like superfamily, N-terminal"/>
    <property type="match status" value="1"/>
</dbReference>
<dbReference type="HAMAP" id="MF_01077">
    <property type="entry name" value="RimP"/>
    <property type="match status" value="1"/>
</dbReference>
<dbReference type="InterPro" id="IPR003728">
    <property type="entry name" value="Ribosome_maturation_RimP"/>
</dbReference>
<dbReference type="InterPro" id="IPR028998">
    <property type="entry name" value="RimP_C"/>
</dbReference>
<dbReference type="InterPro" id="IPR036847">
    <property type="entry name" value="RimP_C_sf"/>
</dbReference>
<dbReference type="InterPro" id="IPR028989">
    <property type="entry name" value="RimP_N"/>
</dbReference>
<dbReference type="InterPro" id="IPR035956">
    <property type="entry name" value="RimP_N_sf"/>
</dbReference>
<dbReference type="NCBIfam" id="NF000927">
    <property type="entry name" value="PRK00092.1-1"/>
    <property type="match status" value="1"/>
</dbReference>
<dbReference type="PANTHER" id="PTHR33867">
    <property type="entry name" value="RIBOSOME MATURATION FACTOR RIMP"/>
    <property type="match status" value="1"/>
</dbReference>
<dbReference type="PANTHER" id="PTHR33867:SF1">
    <property type="entry name" value="RIBOSOME MATURATION FACTOR RIMP"/>
    <property type="match status" value="1"/>
</dbReference>
<dbReference type="Pfam" id="PF17384">
    <property type="entry name" value="DUF150_C"/>
    <property type="match status" value="1"/>
</dbReference>
<dbReference type="Pfam" id="PF02576">
    <property type="entry name" value="RimP_N"/>
    <property type="match status" value="1"/>
</dbReference>
<dbReference type="SUPFAM" id="SSF74942">
    <property type="entry name" value="YhbC-like, C-terminal domain"/>
    <property type="match status" value="1"/>
</dbReference>
<dbReference type="SUPFAM" id="SSF75420">
    <property type="entry name" value="YhbC-like, N-terminal domain"/>
    <property type="match status" value="1"/>
</dbReference>
<protein>
    <recommendedName>
        <fullName evidence="1">Ribosome maturation factor RimP</fullName>
    </recommendedName>
</protein>
<accession>Q87M00</accession>
<reference key="1">
    <citation type="journal article" date="2003" name="Lancet">
        <title>Genome sequence of Vibrio parahaemolyticus: a pathogenic mechanism distinct from that of V. cholerae.</title>
        <authorList>
            <person name="Makino K."/>
            <person name="Oshima K."/>
            <person name="Kurokawa K."/>
            <person name="Yokoyama K."/>
            <person name="Uda T."/>
            <person name="Tagomori K."/>
            <person name="Iijima Y."/>
            <person name="Najima M."/>
            <person name="Nakano M."/>
            <person name="Yamashita A."/>
            <person name="Kubota Y."/>
            <person name="Kimura S."/>
            <person name="Yasunaga T."/>
            <person name="Honda T."/>
            <person name="Shinagawa H."/>
            <person name="Hattori M."/>
            <person name="Iida T."/>
        </authorList>
    </citation>
    <scope>NUCLEOTIDE SEQUENCE [LARGE SCALE GENOMIC DNA]</scope>
    <source>
        <strain>RIMD 2210633</strain>
    </source>
</reference>
<comment type="function">
    <text evidence="1">Required for maturation of 30S ribosomal subunits.</text>
</comment>
<comment type="subcellular location">
    <subcellularLocation>
        <location evidence="1">Cytoplasm</location>
    </subcellularLocation>
</comment>
<comment type="similarity">
    <text evidence="1">Belongs to the RimP family.</text>
</comment>
<name>RIMP_VIBPA</name>
<sequence length="151" mass="16619">MTGLERQLTEMLEAPVEASGYELVGLEFIRAGAHSTLRIYIDHENGINVDDCAEVSHQVSAVLDVEDPISVAYSLEVSSPGLERPLFKAAHYEQFIGHEVSIVLKMAVANRRKWKGIIHGVDGETVTVTVEGQQEEFALSNISKANLIPKF</sequence>